<reference key="1">
    <citation type="journal article" date="2010" name="J. Bacteriol.">
        <title>Whole genome sequences of two Xylella fastidiosa strains (M12 and M23) causing almond leaf scorch disease in California.</title>
        <authorList>
            <person name="Chen J."/>
            <person name="Xie G."/>
            <person name="Han S."/>
            <person name="Chertkov O."/>
            <person name="Sims D."/>
            <person name="Civerolo E.L."/>
        </authorList>
    </citation>
    <scope>NUCLEOTIDE SEQUENCE [LARGE SCALE GENOMIC DNA]</scope>
    <source>
        <strain>M12</strain>
    </source>
</reference>
<evidence type="ECO:0000255" key="1">
    <source>
        <dbReference type="HAMAP-Rule" id="MF_00194"/>
    </source>
</evidence>
<dbReference type="EMBL" id="CP000941">
    <property type="protein sequence ID" value="ACA12633.1"/>
    <property type="molecule type" value="Genomic_DNA"/>
</dbReference>
<dbReference type="RefSeq" id="WP_004083540.1">
    <property type="nucleotide sequence ID" value="NC_010513.1"/>
</dbReference>
<dbReference type="SMR" id="B0U454"/>
<dbReference type="KEGG" id="xfm:Xfasm12_1734"/>
<dbReference type="HOGENOM" id="CLU_052038_1_1_6"/>
<dbReference type="GO" id="GO:0043590">
    <property type="term" value="C:bacterial nucleoid"/>
    <property type="evidence" value="ECO:0007669"/>
    <property type="project" value="TreeGrafter"/>
</dbReference>
<dbReference type="GO" id="GO:0005737">
    <property type="term" value="C:cytoplasm"/>
    <property type="evidence" value="ECO:0007669"/>
    <property type="project" value="UniProtKB-UniRule"/>
</dbReference>
<dbReference type="GO" id="GO:0003690">
    <property type="term" value="F:double-stranded DNA binding"/>
    <property type="evidence" value="ECO:0007669"/>
    <property type="project" value="TreeGrafter"/>
</dbReference>
<dbReference type="GO" id="GO:0006310">
    <property type="term" value="P:DNA recombination"/>
    <property type="evidence" value="ECO:0007669"/>
    <property type="project" value="UniProtKB-UniRule"/>
</dbReference>
<dbReference type="GO" id="GO:0000018">
    <property type="term" value="P:regulation of DNA recombination"/>
    <property type="evidence" value="ECO:0007669"/>
    <property type="project" value="TreeGrafter"/>
</dbReference>
<dbReference type="HAMAP" id="MF_00194">
    <property type="entry name" value="RdgC"/>
    <property type="match status" value="1"/>
</dbReference>
<dbReference type="InterPro" id="IPR007476">
    <property type="entry name" value="RdgC"/>
</dbReference>
<dbReference type="NCBIfam" id="NF001464">
    <property type="entry name" value="PRK00321.1-5"/>
    <property type="match status" value="1"/>
</dbReference>
<dbReference type="NCBIfam" id="NF001465">
    <property type="entry name" value="PRK00321.1-6"/>
    <property type="match status" value="1"/>
</dbReference>
<dbReference type="PANTHER" id="PTHR38103">
    <property type="entry name" value="RECOMBINATION-ASSOCIATED PROTEIN RDGC"/>
    <property type="match status" value="1"/>
</dbReference>
<dbReference type="PANTHER" id="PTHR38103:SF1">
    <property type="entry name" value="RECOMBINATION-ASSOCIATED PROTEIN RDGC"/>
    <property type="match status" value="1"/>
</dbReference>
<dbReference type="Pfam" id="PF04381">
    <property type="entry name" value="RdgC"/>
    <property type="match status" value="1"/>
</dbReference>
<feature type="chain" id="PRO_1000099079" description="Recombination-associated protein RdgC">
    <location>
        <begin position="1"/>
        <end position="302"/>
    </location>
</feature>
<comment type="function">
    <text evidence="1">May be involved in recombination.</text>
</comment>
<comment type="subcellular location">
    <subcellularLocation>
        <location evidence="1">Cytoplasm</location>
        <location evidence="1">Nucleoid</location>
    </subcellularLocation>
</comment>
<comment type="similarity">
    <text evidence="1">Belongs to the RdgC family.</text>
</comment>
<keyword id="KW-0963">Cytoplasm</keyword>
<keyword id="KW-0233">DNA recombination</keyword>
<sequence length="302" mass="34003">MFFRNLTLFRFPTSLDFSQIDSILPNARLRPVGPLEMTSRGFISPFGREEQEVLNQRQGDFLWLTVGSEDKILPASVVNDLLTRKCSEIEEKKGHPPGGRERKRIKDDLIHELLPRAFVKNSRIDAMLDLRYGYVAVDTASRKAAETVISEIRDLLGSFPALPLNAEISIRSMLTSWIAGEPLPEHLNLGDECEMKDATEGGAIIKCQHQALRCEEIDKHLEVGKQVSKLALILDDHVSFVLGDDLVIRKLKFLDGMLDQLEHSDTDGIRAELDACFALMSAEIRRLFLLLEVPLKLSKANN</sequence>
<name>RDGC_XYLFM</name>
<protein>
    <recommendedName>
        <fullName evidence="1">Recombination-associated protein RdgC</fullName>
    </recommendedName>
</protein>
<gene>
    <name evidence="1" type="primary">rdgC</name>
    <name type="ordered locus">Xfasm12_1734</name>
</gene>
<proteinExistence type="inferred from homology"/>
<organism>
    <name type="scientific">Xylella fastidiosa (strain M12)</name>
    <dbReference type="NCBI Taxonomy" id="405440"/>
    <lineage>
        <taxon>Bacteria</taxon>
        <taxon>Pseudomonadati</taxon>
        <taxon>Pseudomonadota</taxon>
        <taxon>Gammaproteobacteria</taxon>
        <taxon>Lysobacterales</taxon>
        <taxon>Lysobacteraceae</taxon>
        <taxon>Xylella</taxon>
    </lineage>
</organism>
<accession>B0U454</accession>